<accession>Q0HZR6</accession>
<proteinExistence type="inferred from homology"/>
<feature type="chain" id="PRO_1000002692" description="UDP-N-acetylglucosamine--N-acetylmuramyl-(pentapeptide) pyrophosphoryl-undecaprenol N-acetylglucosamine transferase">
    <location>
        <begin position="1"/>
        <end position="362"/>
    </location>
</feature>
<feature type="binding site" evidence="1">
    <location>
        <begin position="15"/>
        <end position="17"/>
    </location>
    <ligand>
        <name>UDP-N-acetyl-alpha-D-glucosamine</name>
        <dbReference type="ChEBI" id="CHEBI:57705"/>
    </ligand>
</feature>
<feature type="binding site" evidence="1">
    <location>
        <position position="127"/>
    </location>
    <ligand>
        <name>UDP-N-acetyl-alpha-D-glucosamine</name>
        <dbReference type="ChEBI" id="CHEBI:57705"/>
    </ligand>
</feature>
<feature type="binding site" evidence="1">
    <location>
        <position position="165"/>
    </location>
    <ligand>
        <name>UDP-N-acetyl-alpha-D-glucosamine</name>
        <dbReference type="ChEBI" id="CHEBI:57705"/>
    </ligand>
</feature>
<feature type="binding site" evidence="1">
    <location>
        <position position="191"/>
    </location>
    <ligand>
        <name>UDP-N-acetyl-alpha-D-glucosamine</name>
        <dbReference type="ChEBI" id="CHEBI:57705"/>
    </ligand>
</feature>
<feature type="binding site" evidence="1">
    <location>
        <position position="247"/>
    </location>
    <ligand>
        <name>UDP-N-acetyl-alpha-D-glucosamine</name>
        <dbReference type="ChEBI" id="CHEBI:57705"/>
    </ligand>
</feature>
<feature type="binding site" evidence="1">
    <location>
        <begin position="266"/>
        <end position="271"/>
    </location>
    <ligand>
        <name>UDP-N-acetyl-alpha-D-glucosamine</name>
        <dbReference type="ChEBI" id="CHEBI:57705"/>
    </ligand>
</feature>
<feature type="binding site" evidence="1">
    <location>
        <position position="292"/>
    </location>
    <ligand>
        <name>UDP-N-acetyl-alpha-D-glucosamine</name>
        <dbReference type="ChEBI" id="CHEBI:57705"/>
    </ligand>
</feature>
<dbReference type="EC" id="2.4.1.227" evidence="1"/>
<dbReference type="EMBL" id="CP000444">
    <property type="protein sequence ID" value="ABI41389.1"/>
    <property type="molecule type" value="Genomic_DNA"/>
</dbReference>
<dbReference type="SMR" id="Q0HZR6"/>
<dbReference type="CAZy" id="GT28">
    <property type="family name" value="Glycosyltransferase Family 28"/>
</dbReference>
<dbReference type="KEGG" id="shm:Shewmr7_0386"/>
<dbReference type="HOGENOM" id="CLU_037404_2_0_6"/>
<dbReference type="UniPathway" id="UPA00219"/>
<dbReference type="GO" id="GO:0005886">
    <property type="term" value="C:plasma membrane"/>
    <property type="evidence" value="ECO:0007669"/>
    <property type="project" value="UniProtKB-SubCell"/>
</dbReference>
<dbReference type="GO" id="GO:0051991">
    <property type="term" value="F:UDP-N-acetyl-D-glucosamine:N-acetylmuramoyl-L-alanyl-D-glutamyl-meso-2,6-diaminopimelyl-D-alanyl-D-alanine-diphosphoundecaprenol 4-beta-N-acetylglucosaminlytransferase activity"/>
    <property type="evidence" value="ECO:0007669"/>
    <property type="project" value="RHEA"/>
</dbReference>
<dbReference type="GO" id="GO:0050511">
    <property type="term" value="F:undecaprenyldiphospho-muramoylpentapeptide beta-N-acetylglucosaminyltransferase activity"/>
    <property type="evidence" value="ECO:0007669"/>
    <property type="project" value="UniProtKB-UniRule"/>
</dbReference>
<dbReference type="GO" id="GO:0005975">
    <property type="term" value="P:carbohydrate metabolic process"/>
    <property type="evidence" value="ECO:0007669"/>
    <property type="project" value="InterPro"/>
</dbReference>
<dbReference type="GO" id="GO:0051301">
    <property type="term" value="P:cell division"/>
    <property type="evidence" value="ECO:0007669"/>
    <property type="project" value="UniProtKB-KW"/>
</dbReference>
<dbReference type="GO" id="GO:0071555">
    <property type="term" value="P:cell wall organization"/>
    <property type="evidence" value="ECO:0007669"/>
    <property type="project" value="UniProtKB-KW"/>
</dbReference>
<dbReference type="GO" id="GO:0030259">
    <property type="term" value="P:lipid glycosylation"/>
    <property type="evidence" value="ECO:0007669"/>
    <property type="project" value="UniProtKB-UniRule"/>
</dbReference>
<dbReference type="GO" id="GO:0009252">
    <property type="term" value="P:peptidoglycan biosynthetic process"/>
    <property type="evidence" value="ECO:0007669"/>
    <property type="project" value="UniProtKB-UniRule"/>
</dbReference>
<dbReference type="GO" id="GO:0008360">
    <property type="term" value="P:regulation of cell shape"/>
    <property type="evidence" value="ECO:0007669"/>
    <property type="project" value="UniProtKB-KW"/>
</dbReference>
<dbReference type="CDD" id="cd03785">
    <property type="entry name" value="GT28_MurG"/>
    <property type="match status" value="1"/>
</dbReference>
<dbReference type="Gene3D" id="3.40.50.2000">
    <property type="entry name" value="Glycogen Phosphorylase B"/>
    <property type="match status" value="2"/>
</dbReference>
<dbReference type="HAMAP" id="MF_00033">
    <property type="entry name" value="MurG"/>
    <property type="match status" value="1"/>
</dbReference>
<dbReference type="InterPro" id="IPR006009">
    <property type="entry name" value="GlcNAc_MurG"/>
</dbReference>
<dbReference type="InterPro" id="IPR007235">
    <property type="entry name" value="Glyco_trans_28_C"/>
</dbReference>
<dbReference type="InterPro" id="IPR004276">
    <property type="entry name" value="GlycoTrans_28_N"/>
</dbReference>
<dbReference type="NCBIfam" id="TIGR01133">
    <property type="entry name" value="murG"/>
    <property type="match status" value="1"/>
</dbReference>
<dbReference type="PANTHER" id="PTHR21015:SF22">
    <property type="entry name" value="GLYCOSYLTRANSFERASE"/>
    <property type="match status" value="1"/>
</dbReference>
<dbReference type="PANTHER" id="PTHR21015">
    <property type="entry name" value="UDP-N-ACETYLGLUCOSAMINE--N-ACETYLMURAMYL-(PENTAPEPTIDE) PYROPHOSPHORYL-UNDECAPRENOL N-ACETYLGLUCOSAMINE TRANSFERASE 1"/>
    <property type="match status" value="1"/>
</dbReference>
<dbReference type="Pfam" id="PF04101">
    <property type="entry name" value="Glyco_tran_28_C"/>
    <property type="match status" value="1"/>
</dbReference>
<dbReference type="Pfam" id="PF03033">
    <property type="entry name" value="Glyco_transf_28"/>
    <property type="match status" value="1"/>
</dbReference>
<dbReference type="SUPFAM" id="SSF53756">
    <property type="entry name" value="UDP-Glycosyltransferase/glycogen phosphorylase"/>
    <property type="match status" value="1"/>
</dbReference>
<reference key="1">
    <citation type="submission" date="2006-08" db="EMBL/GenBank/DDBJ databases">
        <title>Complete sequence of chromosome 1 of Shewanella sp. MR-7.</title>
        <authorList>
            <person name="Copeland A."/>
            <person name="Lucas S."/>
            <person name="Lapidus A."/>
            <person name="Barry K."/>
            <person name="Detter J.C."/>
            <person name="Glavina del Rio T."/>
            <person name="Hammon N."/>
            <person name="Israni S."/>
            <person name="Dalin E."/>
            <person name="Tice H."/>
            <person name="Pitluck S."/>
            <person name="Kiss H."/>
            <person name="Brettin T."/>
            <person name="Bruce D."/>
            <person name="Han C."/>
            <person name="Tapia R."/>
            <person name="Gilna P."/>
            <person name="Schmutz J."/>
            <person name="Larimer F."/>
            <person name="Land M."/>
            <person name="Hauser L."/>
            <person name="Kyrpides N."/>
            <person name="Mikhailova N."/>
            <person name="Nealson K."/>
            <person name="Konstantinidis K."/>
            <person name="Klappenbach J."/>
            <person name="Tiedje J."/>
            <person name="Richardson P."/>
        </authorList>
    </citation>
    <scope>NUCLEOTIDE SEQUENCE [LARGE SCALE GENOMIC DNA]</scope>
    <source>
        <strain>MR-7</strain>
    </source>
</reference>
<sequence length="362" mass="38394">MTDAGKRILVMAGGTGGHVFPALAVAKYLAQQGWQVRWLGTADRMEARLVPQYGFDIDFIDIKGVRGNGLVRKLAAPFKVVRSILQAKAVIAEFKPDVVLGMGGFASGPGGVAAKLAGVPLVLHEQNAIPGMTNKLLSRIANQVLCAFKNTFTQVKAKVVGNPIRRELIALGAEPKQAADDALKVLVVGGSLGAKVFNDLMPEVVAALSKQQSITVWHQVGKDNLTGVKSAYQQQGQEGGVNVAEFIDDMEAAYRWADVVLCRAGALTVSELAAVGLPSILVPYPHAVDDHQTRNAQVLVEAGAAFLLPQAILDVNKLVSKLQLLANDRAELAQMGQRARDVAVLDATEQVAQVCIALAEKG</sequence>
<name>MURG_SHESR</name>
<protein>
    <recommendedName>
        <fullName evidence="1">UDP-N-acetylglucosamine--N-acetylmuramyl-(pentapeptide) pyrophosphoryl-undecaprenol N-acetylglucosamine transferase</fullName>
        <ecNumber evidence="1">2.4.1.227</ecNumber>
    </recommendedName>
    <alternativeName>
        <fullName evidence="1">Undecaprenyl-PP-MurNAc-pentapeptide-UDPGlcNAc GlcNAc transferase</fullName>
    </alternativeName>
</protein>
<evidence type="ECO:0000255" key="1">
    <source>
        <dbReference type="HAMAP-Rule" id="MF_00033"/>
    </source>
</evidence>
<keyword id="KW-0131">Cell cycle</keyword>
<keyword id="KW-0132">Cell division</keyword>
<keyword id="KW-0997">Cell inner membrane</keyword>
<keyword id="KW-1003">Cell membrane</keyword>
<keyword id="KW-0133">Cell shape</keyword>
<keyword id="KW-0961">Cell wall biogenesis/degradation</keyword>
<keyword id="KW-0328">Glycosyltransferase</keyword>
<keyword id="KW-0472">Membrane</keyword>
<keyword id="KW-0573">Peptidoglycan synthesis</keyword>
<keyword id="KW-0808">Transferase</keyword>
<comment type="function">
    <text evidence="1">Cell wall formation. Catalyzes the transfer of a GlcNAc subunit on undecaprenyl-pyrophosphoryl-MurNAc-pentapeptide (lipid intermediate I) to form undecaprenyl-pyrophosphoryl-MurNAc-(pentapeptide)GlcNAc (lipid intermediate II).</text>
</comment>
<comment type="catalytic activity">
    <reaction evidence="1">
        <text>di-trans,octa-cis-undecaprenyl diphospho-N-acetyl-alpha-D-muramoyl-L-alanyl-D-glutamyl-meso-2,6-diaminopimeloyl-D-alanyl-D-alanine + UDP-N-acetyl-alpha-D-glucosamine = di-trans,octa-cis-undecaprenyl diphospho-[N-acetyl-alpha-D-glucosaminyl-(1-&gt;4)]-N-acetyl-alpha-D-muramoyl-L-alanyl-D-glutamyl-meso-2,6-diaminopimeloyl-D-alanyl-D-alanine + UDP + H(+)</text>
        <dbReference type="Rhea" id="RHEA:31227"/>
        <dbReference type="ChEBI" id="CHEBI:15378"/>
        <dbReference type="ChEBI" id="CHEBI:57705"/>
        <dbReference type="ChEBI" id="CHEBI:58223"/>
        <dbReference type="ChEBI" id="CHEBI:61387"/>
        <dbReference type="ChEBI" id="CHEBI:61388"/>
        <dbReference type="EC" id="2.4.1.227"/>
    </reaction>
</comment>
<comment type="pathway">
    <text evidence="1">Cell wall biogenesis; peptidoglycan biosynthesis.</text>
</comment>
<comment type="subcellular location">
    <subcellularLocation>
        <location evidence="1">Cell inner membrane</location>
        <topology evidence="1">Peripheral membrane protein</topology>
        <orientation evidence="1">Cytoplasmic side</orientation>
    </subcellularLocation>
</comment>
<comment type="similarity">
    <text evidence="1">Belongs to the glycosyltransferase 28 family. MurG subfamily.</text>
</comment>
<organism>
    <name type="scientific">Shewanella sp. (strain MR-7)</name>
    <dbReference type="NCBI Taxonomy" id="60481"/>
    <lineage>
        <taxon>Bacteria</taxon>
        <taxon>Pseudomonadati</taxon>
        <taxon>Pseudomonadota</taxon>
        <taxon>Gammaproteobacteria</taxon>
        <taxon>Alteromonadales</taxon>
        <taxon>Shewanellaceae</taxon>
        <taxon>Shewanella</taxon>
    </lineage>
</organism>
<gene>
    <name evidence="1" type="primary">murG</name>
    <name type="ordered locus">Shewmr7_0386</name>
</gene>